<keyword id="KW-0133">Cell shape</keyword>
<keyword id="KW-0961">Cell wall biogenesis/degradation</keyword>
<keyword id="KW-0413">Isomerase</keyword>
<keyword id="KW-0573">Peptidoglycan synthesis</keyword>
<keyword id="KW-1185">Reference proteome</keyword>
<accession>A7GYL9</accession>
<protein>
    <recommendedName>
        <fullName evidence="1">Glutamate racemase</fullName>
        <ecNumber evidence="1">5.1.1.3</ecNumber>
    </recommendedName>
</protein>
<evidence type="ECO:0000255" key="1">
    <source>
        <dbReference type="HAMAP-Rule" id="MF_00258"/>
    </source>
</evidence>
<sequence>MKIGIFDSGLGGLSVLNEALKKLPNEEFLYYADRKNVPYGLKSKDEILKFSSHAVKFLIDQGANAIVIACNTATSAAINELRAKFDLPIIGMEPAVKKAADLNREGENSASLRTLVIATPLTVQGAKLKELIERVDSEHLVDVLALPRLVEFAENENFACDEVKEYLREEFAKFKLQNYCALVLGCTHFNYFKDSLREILPAGVSLIDGNEGTINKLISELSRLNLAHGKGQSVEYFYSDAKIYDNGELARIGRYLARLNKMLEIK</sequence>
<dbReference type="EC" id="5.1.1.3" evidence="1"/>
<dbReference type="EMBL" id="CP000767">
    <property type="protein sequence ID" value="EAU00529.1"/>
    <property type="molecule type" value="Genomic_DNA"/>
</dbReference>
<dbReference type="RefSeq" id="WP_009651414.1">
    <property type="nucleotide sequence ID" value="NC_009715.2"/>
</dbReference>
<dbReference type="SMR" id="A7GYL9"/>
<dbReference type="STRING" id="360105.CCV52592_1992"/>
<dbReference type="KEGG" id="ccv:CCV52592_1992"/>
<dbReference type="HOGENOM" id="CLU_052344_1_0_7"/>
<dbReference type="OrthoDB" id="9801055at2"/>
<dbReference type="UniPathway" id="UPA00219"/>
<dbReference type="Proteomes" id="UP000006380">
    <property type="component" value="Chromosome"/>
</dbReference>
<dbReference type="GO" id="GO:0008881">
    <property type="term" value="F:glutamate racemase activity"/>
    <property type="evidence" value="ECO:0007669"/>
    <property type="project" value="UniProtKB-UniRule"/>
</dbReference>
<dbReference type="GO" id="GO:0071555">
    <property type="term" value="P:cell wall organization"/>
    <property type="evidence" value="ECO:0007669"/>
    <property type="project" value="UniProtKB-KW"/>
</dbReference>
<dbReference type="GO" id="GO:0009252">
    <property type="term" value="P:peptidoglycan biosynthetic process"/>
    <property type="evidence" value="ECO:0007669"/>
    <property type="project" value="UniProtKB-UniRule"/>
</dbReference>
<dbReference type="GO" id="GO:0008360">
    <property type="term" value="P:regulation of cell shape"/>
    <property type="evidence" value="ECO:0007669"/>
    <property type="project" value="UniProtKB-KW"/>
</dbReference>
<dbReference type="FunFam" id="3.40.50.1860:FF:000002">
    <property type="entry name" value="Glutamate racemase"/>
    <property type="match status" value="1"/>
</dbReference>
<dbReference type="Gene3D" id="3.40.50.1860">
    <property type="match status" value="2"/>
</dbReference>
<dbReference type="HAMAP" id="MF_00258">
    <property type="entry name" value="Glu_racemase"/>
    <property type="match status" value="1"/>
</dbReference>
<dbReference type="InterPro" id="IPR015942">
    <property type="entry name" value="Asp/Glu/hydantoin_racemase"/>
</dbReference>
<dbReference type="InterPro" id="IPR001920">
    <property type="entry name" value="Asp/Glu_race"/>
</dbReference>
<dbReference type="InterPro" id="IPR018187">
    <property type="entry name" value="Asp/Glu_racemase_AS_1"/>
</dbReference>
<dbReference type="InterPro" id="IPR004391">
    <property type="entry name" value="Glu_race"/>
</dbReference>
<dbReference type="NCBIfam" id="TIGR00067">
    <property type="entry name" value="glut_race"/>
    <property type="match status" value="1"/>
</dbReference>
<dbReference type="PANTHER" id="PTHR21198">
    <property type="entry name" value="GLUTAMATE RACEMASE"/>
    <property type="match status" value="1"/>
</dbReference>
<dbReference type="PANTHER" id="PTHR21198:SF3">
    <property type="entry name" value="GLUTAMATE RACEMASE"/>
    <property type="match status" value="1"/>
</dbReference>
<dbReference type="Pfam" id="PF01177">
    <property type="entry name" value="Asp_Glu_race"/>
    <property type="match status" value="1"/>
</dbReference>
<dbReference type="SUPFAM" id="SSF53681">
    <property type="entry name" value="Aspartate/glutamate racemase"/>
    <property type="match status" value="2"/>
</dbReference>
<dbReference type="PROSITE" id="PS00923">
    <property type="entry name" value="ASP_GLU_RACEMASE_1"/>
    <property type="match status" value="1"/>
</dbReference>
<comment type="function">
    <text evidence="1">Provides the (R)-glutamate required for cell wall biosynthesis.</text>
</comment>
<comment type="catalytic activity">
    <reaction evidence="1">
        <text>L-glutamate = D-glutamate</text>
        <dbReference type="Rhea" id="RHEA:12813"/>
        <dbReference type="ChEBI" id="CHEBI:29985"/>
        <dbReference type="ChEBI" id="CHEBI:29986"/>
        <dbReference type="EC" id="5.1.1.3"/>
    </reaction>
</comment>
<comment type="pathway">
    <text evidence="1">Cell wall biogenesis; peptidoglycan biosynthesis.</text>
</comment>
<comment type="similarity">
    <text evidence="1">Belongs to the aspartate/glutamate racemases family.</text>
</comment>
<reference key="1">
    <citation type="submission" date="2007-07" db="EMBL/GenBank/DDBJ databases">
        <title>Genome sequence of Campylobacter curvus 525.92 isolated from human feces.</title>
        <authorList>
            <person name="Fouts D.E."/>
            <person name="Mongodin E.F."/>
            <person name="Puiu D."/>
            <person name="Sebastian Y."/>
            <person name="Miller W.G."/>
            <person name="Mandrell R.E."/>
            <person name="Lastovica A.J."/>
            <person name="Nelson K.E."/>
        </authorList>
    </citation>
    <scope>NUCLEOTIDE SEQUENCE [LARGE SCALE GENOMIC DNA]</scope>
    <source>
        <strain>525.92</strain>
    </source>
</reference>
<feature type="chain" id="PRO_1000047553" description="Glutamate racemase">
    <location>
        <begin position="1"/>
        <end position="266"/>
    </location>
</feature>
<feature type="active site" description="Proton donor/acceptor" evidence="1">
    <location>
        <position position="70"/>
    </location>
</feature>
<feature type="active site" description="Proton donor/acceptor" evidence="1">
    <location>
        <position position="186"/>
    </location>
</feature>
<feature type="binding site" evidence="1">
    <location>
        <begin position="7"/>
        <end position="8"/>
    </location>
    <ligand>
        <name>substrate</name>
    </ligand>
</feature>
<feature type="binding site" evidence="1">
    <location>
        <begin position="39"/>
        <end position="40"/>
    </location>
    <ligand>
        <name>substrate</name>
    </ligand>
</feature>
<feature type="binding site" evidence="1">
    <location>
        <begin position="71"/>
        <end position="72"/>
    </location>
    <ligand>
        <name>substrate</name>
    </ligand>
</feature>
<feature type="binding site" evidence="1">
    <location>
        <begin position="187"/>
        <end position="188"/>
    </location>
    <ligand>
        <name>substrate</name>
    </ligand>
</feature>
<proteinExistence type="inferred from homology"/>
<organism>
    <name type="scientific">Campylobacter curvus (strain 525.92)</name>
    <dbReference type="NCBI Taxonomy" id="360105"/>
    <lineage>
        <taxon>Bacteria</taxon>
        <taxon>Pseudomonadati</taxon>
        <taxon>Campylobacterota</taxon>
        <taxon>Epsilonproteobacteria</taxon>
        <taxon>Campylobacterales</taxon>
        <taxon>Campylobacteraceae</taxon>
        <taxon>Campylobacter</taxon>
    </lineage>
</organism>
<gene>
    <name evidence="1" type="primary">murI</name>
    <name type="ordered locus">Ccur92_10070</name>
    <name type="ORF">CCV52592_1992</name>
</gene>
<name>MURI_CAMC5</name>